<dbReference type="EMBL" id="U48250">
    <property type="protein sequence ID" value="AAC72247.1"/>
    <property type="status" value="ALT_INIT"/>
    <property type="molecule type" value="mRNA"/>
</dbReference>
<dbReference type="EMBL" id="AF221520">
    <property type="protein sequence ID" value="AAF61215.1"/>
    <property type="status" value="ALT_INIT"/>
    <property type="molecule type" value="mRNA"/>
</dbReference>
<dbReference type="EMBL" id="AK091462">
    <property type="protein sequence ID" value="BAG52365.1"/>
    <property type="molecule type" value="mRNA"/>
</dbReference>
<dbReference type="EMBL" id="BC034681">
    <property type="protein sequence ID" value="AAH34681.1"/>
    <property type="molecule type" value="mRNA"/>
</dbReference>
<dbReference type="EMBL" id="BC036245">
    <property type="protein sequence ID" value="AAH36245.1"/>
    <property type="molecule type" value="mRNA"/>
</dbReference>
<dbReference type="EMBL" id="BC047511">
    <property type="protein sequence ID" value="AAH47511.1"/>
    <property type="molecule type" value="mRNA"/>
</dbReference>
<dbReference type="CCDS" id="CCDS13620.1"/>
<dbReference type="PIR" id="G02409">
    <property type="entry name" value="G02409"/>
</dbReference>
<dbReference type="RefSeq" id="NP_005797.1">
    <property type="nucleotide sequence ID" value="NM_005806.4"/>
</dbReference>
<dbReference type="RefSeq" id="XP_005260965.1">
    <property type="nucleotide sequence ID" value="XM_005260908.2"/>
</dbReference>
<dbReference type="RefSeq" id="XP_054180275.1">
    <property type="nucleotide sequence ID" value="XM_054324300.1"/>
</dbReference>
<dbReference type="SMR" id="Q13516"/>
<dbReference type="BioGRID" id="115510">
    <property type="interactions" value="20"/>
</dbReference>
<dbReference type="FunCoup" id="Q13516">
    <property type="interactions" value="785"/>
</dbReference>
<dbReference type="IntAct" id="Q13516">
    <property type="interactions" value="12"/>
</dbReference>
<dbReference type="STRING" id="9606.ENSP00000331040"/>
<dbReference type="GlyGen" id="Q13516">
    <property type="glycosylation" value="2 sites, 1 O-linked glycan (1 site)"/>
</dbReference>
<dbReference type="iPTMnet" id="Q13516"/>
<dbReference type="PhosphoSitePlus" id="Q13516"/>
<dbReference type="BioMuta" id="OLIG2"/>
<dbReference type="DMDM" id="22261817"/>
<dbReference type="MassIVE" id="Q13516"/>
<dbReference type="PaxDb" id="9606-ENSP00000331040"/>
<dbReference type="PeptideAtlas" id="Q13516"/>
<dbReference type="Antibodypedia" id="917">
    <property type="antibodies" value="550 antibodies from 41 providers"/>
</dbReference>
<dbReference type="DNASU" id="10215"/>
<dbReference type="Ensembl" id="ENST00000333337.3">
    <property type="protein sequence ID" value="ENSP00000331040.3"/>
    <property type="gene ID" value="ENSG00000205927.5"/>
</dbReference>
<dbReference type="Ensembl" id="ENST00000382357.4">
    <property type="protein sequence ID" value="ENSP00000371794.3"/>
    <property type="gene ID" value="ENSG00000205927.5"/>
</dbReference>
<dbReference type="GeneID" id="10215"/>
<dbReference type="KEGG" id="hsa:10215"/>
<dbReference type="MANE-Select" id="ENST00000382357.4">
    <property type="protein sequence ID" value="ENSP00000371794.3"/>
    <property type="RefSeq nucleotide sequence ID" value="NM_005806.4"/>
    <property type="RefSeq protein sequence ID" value="NP_005797.1"/>
</dbReference>
<dbReference type="UCSC" id="uc002yqx.3">
    <property type="organism name" value="human"/>
</dbReference>
<dbReference type="AGR" id="HGNC:9398"/>
<dbReference type="CTD" id="10215"/>
<dbReference type="DisGeNET" id="10215"/>
<dbReference type="GeneCards" id="OLIG2"/>
<dbReference type="HGNC" id="HGNC:9398">
    <property type="gene designation" value="OLIG2"/>
</dbReference>
<dbReference type="HPA" id="ENSG00000205927">
    <property type="expression patterns" value="Tissue enriched (brain)"/>
</dbReference>
<dbReference type="MalaCards" id="OLIG2"/>
<dbReference type="MIM" id="606386">
    <property type="type" value="gene"/>
</dbReference>
<dbReference type="neXtProt" id="NX_Q13516"/>
<dbReference type="OpenTargets" id="ENSG00000205927"/>
<dbReference type="PharmGKB" id="PA31919"/>
<dbReference type="VEuPathDB" id="HostDB:ENSG00000205927"/>
<dbReference type="eggNOG" id="KOG3898">
    <property type="taxonomic scope" value="Eukaryota"/>
</dbReference>
<dbReference type="GeneTree" id="ENSGT00940000161651"/>
<dbReference type="HOGENOM" id="CLU_065376_1_0_1"/>
<dbReference type="InParanoid" id="Q13516"/>
<dbReference type="OMA" id="SFQHWGA"/>
<dbReference type="OrthoDB" id="10011855at2759"/>
<dbReference type="PAN-GO" id="Q13516">
    <property type="GO annotations" value="5 GO annotations based on evolutionary models"/>
</dbReference>
<dbReference type="PhylomeDB" id="Q13516"/>
<dbReference type="TreeFam" id="TF322733"/>
<dbReference type="PathwayCommons" id="Q13516"/>
<dbReference type="SignaLink" id="Q13516"/>
<dbReference type="SIGNOR" id="Q13516"/>
<dbReference type="BioGRID-ORCS" id="10215">
    <property type="hits" value="18 hits in 1171 CRISPR screens"/>
</dbReference>
<dbReference type="GeneWiki" id="OLIG2"/>
<dbReference type="GenomeRNAi" id="10215"/>
<dbReference type="Pharos" id="Q13516">
    <property type="development level" value="Tbio"/>
</dbReference>
<dbReference type="PRO" id="PR:Q13516"/>
<dbReference type="Proteomes" id="UP000005640">
    <property type="component" value="Chromosome 21"/>
</dbReference>
<dbReference type="RNAct" id="Q13516">
    <property type="molecule type" value="protein"/>
</dbReference>
<dbReference type="Bgee" id="ENSG00000205927">
    <property type="expression patterns" value="Expressed in inferior vagus X ganglion and 76 other cell types or tissues"/>
</dbReference>
<dbReference type="ExpressionAtlas" id="Q13516">
    <property type="expression patterns" value="baseline and differential"/>
</dbReference>
<dbReference type="GO" id="GO:0000785">
    <property type="term" value="C:chromatin"/>
    <property type="evidence" value="ECO:0000247"/>
    <property type="project" value="NTNU_SB"/>
</dbReference>
<dbReference type="GO" id="GO:0005737">
    <property type="term" value="C:cytoplasm"/>
    <property type="evidence" value="ECO:0007669"/>
    <property type="project" value="UniProtKB-SubCell"/>
</dbReference>
<dbReference type="GO" id="GO:0005634">
    <property type="term" value="C:nucleus"/>
    <property type="evidence" value="ECO:0000318"/>
    <property type="project" value="GO_Central"/>
</dbReference>
<dbReference type="GO" id="GO:0000981">
    <property type="term" value="F:DNA-binding transcription factor activity, RNA polymerase II-specific"/>
    <property type="evidence" value="ECO:0000247"/>
    <property type="project" value="NTNU_SB"/>
</dbReference>
<dbReference type="GO" id="GO:0070888">
    <property type="term" value="F:E-box binding"/>
    <property type="evidence" value="ECO:0000318"/>
    <property type="project" value="GO_Central"/>
</dbReference>
<dbReference type="GO" id="GO:0071837">
    <property type="term" value="F:HMG box domain binding"/>
    <property type="evidence" value="ECO:0007669"/>
    <property type="project" value="Ensembl"/>
</dbReference>
<dbReference type="GO" id="GO:0042802">
    <property type="term" value="F:identical protein binding"/>
    <property type="evidence" value="ECO:0007669"/>
    <property type="project" value="Ensembl"/>
</dbReference>
<dbReference type="GO" id="GO:0046983">
    <property type="term" value="F:protein dimerization activity"/>
    <property type="evidence" value="ECO:0007669"/>
    <property type="project" value="InterPro"/>
</dbReference>
<dbReference type="GO" id="GO:1990837">
    <property type="term" value="F:sequence-specific double-stranded DNA binding"/>
    <property type="evidence" value="ECO:0000314"/>
    <property type="project" value="ARUK-UCL"/>
</dbReference>
<dbReference type="GO" id="GO:0061564">
    <property type="term" value="P:axon development"/>
    <property type="evidence" value="ECO:0000318"/>
    <property type="project" value="GO_Central"/>
</dbReference>
<dbReference type="GO" id="GO:0042552">
    <property type="term" value="P:myelination"/>
    <property type="evidence" value="ECO:0007669"/>
    <property type="project" value="Ensembl"/>
</dbReference>
<dbReference type="GO" id="GO:0045665">
    <property type="term" value="P:negative regulation of neuron differentiation"/>
    <property type="evidence" value="ECO:0007669"/>
    <property type="project" value="Ensembl"/>
</dbReference>
<dbReference type="GO" id="GO:0000122">
    <property type="term" value="P:negative regulation of transcription by RNA polymerase II"/>
    <property type="evidence" value="ECO:0007669"/>
    <property type="project" value="Ensembl"/>
</dbReference>
<dbReference type="GO" id="GO:0048663">
    <property type="term" value="P:neuron fate commitment"/>
    <property type="evidence" value="ECO:0007669"/>
    <property type="project" value="Ensembl"/>
</dbReference>
<dbReference type="GO" id="GO:0048714">
    <property type="term" value="P:positive regulation of oligodendrocyte differentiation"/>
    <property type="evidence" value="ECO:0007669"/>
    <property type="project" value="Ensembl"/>
</dbReference>
<dbReference type="GO" id="GO:0045944">
    <property type="term" value="P:positive regulation of transcription by RNA polymerase II"/>
    <property type="evidence" value="ECO:0000318"/>
    <property type="project" value="GO_Central"/>
</dbReference>
<dbReference type="GO" id="GO:0007423">
    <property type="term" value="P:sensory organ development"/>
    <property type="evidence" value="ECO:0000318"/>
    <property type="project" value="GO_Central"/>
</dbReference>
<dbReference type="GO" id="GO:0021522">
    <property type="term" value="P:spinal cord motor neuron differentiation"/>
    <property type="evidence" value="ECO:0007669"/>
    <property type="project" value="Ensembl"/>
</dbReference>
<dbReference type="GO" id="GO:0021530">
    <property type="term" value="P:spinal cord oligodendrocyte cell fate specification"/>
    <property type="evidence" value="ECO:0007669"/>
    <property type="project" value="Ensembl"/>
</dbReference>
<dbReference type="GO" id="GO:0021794">
    <property type="term" value="P:thalamus development"/>
    <property type="evidence" value="ECO:0007669"/>
    <property type="project" value="Ensembl"/>
</dbReference>
<dbReference type="CDD" id="cd18940">
    <property type="entry name" value="bHLH_TS_OLIG2"/>
    <property type="match status" value="1"/>
</dbReference>
<dbReference type="FunFam" id="4.10.280.10:FF:000031">
    <property type="entry name" value="Oligodendrocyte transcription factor 3"/>
    <property type="match status" value="1"/>
</dbReference>
<dbReference type="Gene3D" id="4.10.280.10">
    <property type="entry name" value="Helix-loop-helix DNA-binding domain"/>
    <property type="match status" value="1"/>
</dbReference>
<dbReference type="InterPro" id="IPR011598">
    <property type="entry name" value="bHLH_dom"/>
</dbReference>
<dbReference type="InterPro" id="IPR050359">
    <property type="entry name" value="bHLH_transcription_factors"/>
</dbReference>
<dbReference type="InterPro" id="IPR036638">
    <property type="entry name" value="HLH_DNA-bd_sf"/>
</dbReference>
<dbReference type="InterPro" id="IPR032658">
    <property type="entry name" value="Olig2_bHLH"/>
</dbReference>
<dbReference type="PANTHER" id="PTHR19290">
    <property type="entry name" value="BASIC HELIX-LOOP-HELIX PROTEIN NEUROGENIN-RELATED"/>
    <property type="match status" value="1"/>
</dbReference>
<dbReference type="PANTHER" id="PTHR19290:SF32">
    <property type="entry name" value="OLIGODENDROCYTE TRANSCRIPTION FACTOR 2"/>
    <property type="match status" value="1"/>
</dbReference>
<dbReference type="Pfam" id="PF00010">
    <property type="entry name" value="HLH"/>
    <property type="match status" value="1"/>
</dbReference>
<dbReference type="SMART" id="SM00353">
    <property type="entry name" value="HLH"/>
    <property type="match status" value="1"/>
</dbReference>
<dbReference type="SUPFAM" id="SSF47459">
    <property type="entry name" value="HLH, helix-loop-helix DNA-binding domain"/>
    <property type="match status" value="1"/>
</dbReference>
<dbReference type="PROSITE" id="PS50888">
    <property type="entry name" value="BHLH"/>
    <property type="match status" value="1"/>
</dbReference>
<keyword id="KW-0160">Chromosomal rearrangement</keyword>
<keyword id="KW-0963">Cytoplasm</keyword>
<keyword id="KW-0217">Developmental protein</keyword>
<keyword id="KW-0238">DNA-binding</keyword>
<keyword id="KW-0539">Nucleus</keyword>
<keyword id="KW-1267">Proteomics identification</keyword>
<keyword id="KW-0656">Proto-oncogene</keyword>
<keyword id="KW-1185">Reference proteome</keyword>
<keyword id="KW-0804">Transcription</keyword>
<keyword id="KW-0805">Transcription regulation</keyword>
<accession>Q13516</accession>
<accession>B3KRF3</accession>
<accession>Q05BP9</accession>
<accession>Q49AL3</accession>
<accession>Q86X04</accession>
<accession>Q9NZ14</accession>
<name>OLIG2_HUMAN</name>
<protein>
    <recommendedName>
        <fullName>Oligodendrocyte transcription factor 2</fullName>
        <shortName>Oligo2</shortName>
    </recommendedName>
    <alternativeName>
        <fullName>Class B basic helix-loop-helix protein 1</fullName>
        <shortName>bHLHb1</shortName>
    </alternativeName>
    <alternativeName>
        <fullName>Class E basic helix-loop-helix protein 19</fullName>
        <shortName>bHLHe19</shortName>
    </alternativeName>
    <alternativeName>
        <fullName>Protein kinase C-binding protein 2</fullName>
    </alternativeName>
    <alternativeName>
        <fullName>Protein kinase C-binding protein RACK17</fullName>
    </alternativeName>
</protein>
<organism>
    <name type="scientific">Homo sapiens</name>
    <name type="common">Human</name>
    <dbReference type="NCBI Taxonomy" id="9606"/>
    <lineage>
        <taxon>Eukaryota</taxon>
        <taxon>Metazoa</taxon>
        <taxon>Chordata</taxon>
        <taxon>Craniata</taxon>
        <taxon>Vertebrata</taxon>
        <taxon>Euteleostomi</taxon>
        <taxon>Mammalia</taxon>
        <taxon>Eutheria</taxon>
        <taxon>Euarchontoglires</taxon>
        <taxon>Primates</taxon>
        <taxon>Haplorrhini</taxon>
        <taxon>Catarrhini</taxon>
        <taxon>Hominidae</taxon>
        <taxon>Homo</taxon>
    </lineage>
</organism>
<sequence length="323" mass="32385">MDSDASLVSSRPSSPEPDDLFLPARSKGSSGSAFTGGTVSSSTPSDCPPELSAELRGAMGSAGAHPGDKLGGSGFKSSSSSTSSSTSSAAASSTKKDKKQMTEPELQQLRLKINSRERKRMHDLNIAMDGLREVMPYAHGPSVRKLSKIATLLLARNYILMLTNSLEEMKRLVSEIYGGHHAGFHPSACGGLAHSAPLPAATAHPAAAAHAAHHPAVHHPILPPAAAAAAAAAAAAAVSSASLPGSGLPSVGSIRPPHGLLKSPSAAAAAPLGGGGGGSGASGGFQHWGGMPCPCSMCQVPPPHHHVSAMGAGSLPRLTSDAK</sequence>
<proteinExistence type="evidence at protein level"/>
<evidence type="ECO:0000250" key="1"/>
<evidence type="ECO:0000250" key="2">
    <source>
        <dbReference type="UniProtKB" id="Q9EQW6"/>
    </source>
</evidence>
<evidence type="ECO:0000255" key="3">
    <source>
        <dbReference type="PROSITE-ProRule" id="PRU00981"/>
    </source>
</evidence>
<evidence type="ECO:0000256" key="4">
    <source>
        <dbReference type="SAM" id="MobiDB-lite"/>
    </source>
</evidence>
<evidence type="ECO:0000269" key="5">
    <source>
    </source>
</evidence>
<evidence type="ECO:0000269" key="6">
    <source>
    </source>
</evidence>
<evidence type="ECO:0000269" key="7">
    <source>
    </source>
</evidence>
<evidence type="ECO:0000305" key="8"/>
<gene>
    <name type="primary">OLIG2</name>
    <name type="synonym">BHLHB1</name>
    <name type="synonym">BHLHE19</name>
    <name type="synonym">PRKCBP2</name>
    <name type="synonym">RACK17</name>
</gene>
<comment type="function">
    <text evidence="2">Required for oligodendrocyte and motor neuron specification in the spinal cord, as well as for the development of somatic motor neurons in the hindbrain. Functions together with ZNF488 to promote oligodendrocyte differentiation. Cooperates with OLIG1 to establish the pMN domain of the embryonic neural tube. Antagonist of V2 interneuron and of NKX2-2-induced V3 interneuron development.</text>
</comment>
<comment type="subunit">
    <text evidence="2">Interacts with NKX2-2. Interacts with ZNF488.</text>
</comment>
<comment type="interaction">
    <interactant intactId="EBI-3914525">
        <id>Q13516</id>
    </interactant>
    <interactant intactId="EBI-10176396">
        <id>P60329</id>
        <label>KRTAP12-4</label>
    </interactant>
    <organismsDiffer>false</organismsDiffer>
    <experiments>3</experiments>
</comment>
<comment type="interaction">
    <interactant intactId="EBI-3914525">
        <id>Q13516</id>
    </interactant>
    <interactant intactId="EBI-359793">
        <id>P40222</id>
        <label>TXLNA</label>
    </interactant>
    <organismsDiffer>false</organismsDiffer>
    <experiments>3</experiments>
</comment>
<comment type="subcellular location">
    <subcellularLocation>
        <location evidence="3">Nucleus</location>
    </subcellularLocation>
    <subcellularLocation>
        <location evidence="1">Cytoplasm</location>
    </subcellularLocation>
    <text evidence="1">The NLS contained in the bHLH domain could be masked in the native form and translocation to the nucleus could be mediated by interaction either with class E bHLH partner protein or with NKX2-2.</text>
</comment>
<comment type="tissue specificity">
    <text evidence="6 7">Expressed in the brain, in oligodendrocytes. Strongly expressed in oligodendrogliomas, while expression is weak to moderate in astrocytomas. Expression in glioblastomas highly variable.</text>
</comment>
<comment type="induction">
    <text evidence="1">By SHH. Also induced by NKX6-1 in the developing spinal cord, but not in the rostral hindbrain (By similarity).</text>
</comment>
<comment type="domain">
    <text evidence="1">The bHLH is essential for interaction with NKX2-2.</text>
</comment>
<comment type="disease">
    <text evidence="5">A chromosomal aberration involving OLIG2 may be a cause of a form of T-cell acute lymphoblastic leukemia (T-ALL). Translocation t(14;21)(q11.2;q22) with TCRA.</text>
</comment>
<comment type="sequence caution" evidence="8">
    <conflict type="erroneous initiation">
        <sequence resource="EMBL-CDS" id="AAC72247"/>
    </conflict>
</comment>
<comment type="sequence caution" evidence="8">
    <conflict type="erroneous initiation">
        <sequence resource="EMBL-CDS" id="AAF61215"/>
    </conflict>
</comment>
<comment type="online information" name="Atlas of Genetics and Cytogenetics in Oncology and Haematology">
    <link uri="https://atlasgeneticsoncology.org/gene/236/OLIG2"/>
</comment>
<feature type="chain" id="PRO_0000127414" description="Oligodendrocyte transcription factor 2">
    <location>
        <begin position="1"/>
        <end position="323"/>
    </location>
</feature>
<feature type="domain" description="bHLH" evidence="3">
    <location>
        <begin position="108"/>
        <end position="162"/>
    </location>
</feature>
<feature type="region of interest" description="Disordered" evidence="4">
    <location>
        <begin position="1"/>
        <end position="107"/>
    </location>
</feature>
<feature type="compositionally biased region" description="Polar residues" evidence="4">
    <location>
        <begin position="1"/>
        <end position="13"/>
    </location>
</feature>
<feature type="compositionally biased region" description="Polar residues" evidence="4">
    <location>
        <begin position="27"/>
        <end position="45"/>
    </location>
</feature>
<feature type="compositionally biased region" description="Low complexity" evidence="4">
    <location>
        <begin position="76"/>
        <end position="93"/>
    </location>
</feature>
<feature type="sequence conflict" description="In Ref. 3; AAH36245." evidence="8" ref="3">
    <original>G</original>
    <variation>V</variation>
    <location>
        <position position="67"/>
    </location>
</feature>
<feature type="sequence conflict" description="In Ref. 4; AAH47511." evidence="8" ref="4">
    <original>A</original>
    <variation>T</variation>
    <location>
        <position position="150"/>
    </location>
</feature>
<reference key="1">
    <citation type="submission" date="1996-02" db="EMBL/GenBank/DDBJ databases">
        <title>Protein kinase C-binding protein.</title>
        <authorList>
            <person name="Kuroda S."/>
            <person name="Tokunaga C."/>
            <person name="Kiyohara Y."/>
            <person name="Konishi H."/>
            <person name="Kikkawa U."/>
        </authorList>
    </citation>
    <scope>NUCLEOTIDE SEQUENCE [MRNA]</scope>
    <source>
        <tissue>Hippocampus</tissue>
    </source>
</reference>
<reference key="2">
    <citation type="journal article" date="2000" name="Proc. Natl. Acad. Sci. U.S.A.">
        <title>The t(14;21)(q11.2;q22) chromosomal translocation associated with T-cell acute lymphoblastic leukemia activates the BHLHB1 gene.</title>
        <authorList>
            <person name="Wang J."/>
            <person name="Jani-Sait S.N."/>
            <person name="Escalon E.A."/>
            <person name="Carroll A.J."/>
            <person name="de Jong P.J."/>
            <person name="Kirsch I.R."/>
            <person name="Aplan P.D."/>
        </authorList>
    </citation>
    <scope>NUCLEOTIDE SEQUENCE [MRNA]</scope>
    <scope>CHROMOSOMAL TRANSLOCATION</scope>
</reference>
<reference key="3">
    <citation type="journal article" date="2004" name="Nat. Genet.">
        <title>Complete sequencing and characterization of 21,243 full-length human cDNAs.</title>
        <authorList>
            <person name="Ota T."/>
            <person name="Suzuki Y."/>
            <person name="Nishikawa T."/>
            <person name="Otsuki T."/>
            <person name="Sugiyama T."/>
            <person name="Irie R."/>
            <person name="Wakamatsu A."/>
            <person name="Hayashi K."/>
            <person name="Sato H."/>
            <person name="Nagai K."/>
            <person name="Kimura K."/>
            <person name="Makita H."/>
            <person name="Sekine M."/>
            <person name="Obayashi M."/>
            <person name="Nishi T."/>
            <person name="Shibahara T."/>
            <person name="Tanaka T."/>
            <person name="Ishii S."/>
            <person name="Yamamoto J."/>
            <person name="Saito K."/>
            <person name="Kawai Y."/>
            <person name="Isono Y."/>
            <person name="Nakamura Y."/>
            <person name="Nagahari K."/>
            <person name="Murakami K."/>
            <person name="Yasuda T."/>
            <person name="Iwayanagi T."/>
            <person name="Wagatsuma M."/>
            <person name="Shiratori A."/>
            <person name="Sudo H."/>
            <person name="Hosoiri T."/>
            <person name="Kaku Y."/>
            <person name="Kodaira H."/>
            <person name="Kondo H."/>
            <person name="Sugawara M."/>
            <person name="Takahashi M."/>
            <person name="Kanda K."/>
            <person name="Yokoi T."/>
            <person name="Furuya T."/>
            <person name="Kikkawa E."/>
            <person name="Omura Y."/>
            <person name="Abe K."/>
            <person name="Kamihara K."/>
            <person name="Katsuta N."/>
            <person name="Sato K."/>
            <person name="Tanikawa M."/>
            <person name="Yamazaki M."/>
            <person name="Ninomiya K."/>
            <person name="Ishibashi T."/>
            <person name="Yamashita H."/>
            <person name="Murakawa K."/>
            <person name="Fujimori K."/>
            <person name="Tanai H."/>
            <person name="Kimata M."/>
            <person name="Watanabe M."/>
            <person name="Hiraoka S."/>
            <person name="Chiba Y."/>
            <person name="Ishida S."/>
            <person name="Ono Y."/>
            <person name="Takiguchi S."/>
            <person name="Watanabe S."/>
            <person name="Yosida M."/>
            <person name="Hotuta T."/>
            <person name="Kusano J."/>
            <person name="Kanehori K."/>
            <person name="Takahashi-Fujii A."/>
            <person name="Hara H."/>
            <person name="Tanase T.-O."/>
            <person name="Nomura Y."/>
            <person name="Togiya S."/>
            <person name="Komai F."/>
            <person name="Hara R."/>
            <person name="Takeuchi K."/>
            <person name="Arita M."/>
            <person name="Imose N."/>
            <person name="Musashino K."/>
            <person name="Yuuki H."/>
            <person name="Oshima A."/>
            <person name="Sasaki N."/>
            <person name="Aotsuka S."/>
            <person name="Yoshikawa Y."/>
            <person name="Matsunawa H."/>
            <person name="Ichihara T."/>
            <person name="Shiohata N."/>
            <person name="Sano S."/>
            <person name="Moriya S."/>
            <person name="Momiyama H."/>
            <person name="Satoh N."/>
            <person name="Takami S."/>
            <person name="Terashima Y."/>
            <person name="Suzuki O."/>
            <person name="Nakagawa S."/>
            <person name="Senoh A."/>
            <person name="Mizoguchi H."/>
            <person name="Goto Y."/>
            <person name="Shimizu F."/>
            <person name="Wakebe H."/>
            <person name="Hishigaki H."/>
            <person name="Watanabe T."/>
            <person name="Sugiyama A."/>
            <person name="Takemoto M."/>
            <person name="Kawakami B."/>
            <person name="Yamazaki M."/>
            <person name="Watanabe K."/>
            <person name="Kumagai A."/>
            <person name="Itakura S."/>
            <person name="Fukuzumi Y."/>
            <person name="Fujimori Y."/>
            <person name="Komiyama M."/>
            <person name="Tashiro H."/>
            <person name="Tanigami A."/>
            <person name="Fujiwara T."/>
            <person name="Ono T."/>
            <person name="Yamada K."/>
            <person name="Fujii Y."/>
            <person name="Ozaki K."/>
            <person name="Hirao M."/>
            <person name="Ohmori Y."/>
            <person name="Kawabata A."/>
            <person name="Hikiji T."/>
            <person name="Kobatake N."/>
            <person name="Inagaki H."/>
            <person name="Ikema Y."/>
            <person name="Okamoto S."/>
            <person name="Okitani R."/>
            <person name="Kawakami T."/>
            <person name="Noguchi S."/>
            <person name="Itoh T."/>
            <person name="Shigeta K."/>
            <person name="Senba T."/>
            <person name="Matsumura K."/>
            <person name="Nakajima Y."/>
            <person name="Mizuno T."/>
            <person name="Morinaga M."/>
            <person name="Sasaki M."/>
            <person name="Togashi T."/>
            <person name="Oyama M."/>
            <person name="Hata H."/>
            <person name="Watanabe M."/>
            <person name="Komatsu T."/>
            <person name="Mizushima-Sugano J."/>
            <person name="Satoh T."/>
            <person name="Shirai Y."/>
            <person name="Takahashi Y."/>
            <person name="Nakagawa K."/>
            <person name="Okumura K."/>
            <person name="Nagase T."/>
            <person name="Nomura N."/>
            <person name="Kikuchi H."/>
            <person name="Masuho Y."/>
            <person name="Yamashita R."/>
            <person name="Nakai K."/>
            <person name="Yada T."/>
            <person name="Nakamura Y."/>
            <person name="Ohara O."/>
            <person name="Isogai T."/>
            <person name="Sugano S."/>
        </authorList>
    </citation>
    <scope>NUCLEOTIDE SEQUENCE [LARGE SCALE MRNA]</scope>
    <source>
        <tissue>Brain</tissue>
    </source>
</reference>
<reference key="4">
    <citation type="journal article" date="2004" name="Genome Res.">
        <title>The status, quality, and expansion of the NIH full-length cDNA project: the Mammalian Gene Collection (MGC).</title>
        <authorList>
            <consortium name="The MGC Project Team"/>
        </authorList>
    </citation>
    <scope>NUCLEOTIDE SEQUENCE [LARGE SCALE MRNA]</scope>
    <source>
        <tissue>Brain</tissue>
    </source>
</reference>
<reference key="5">
    <citation type="journal article" date="2001" name="Lancet">
        <title>OLIG2 as a specific marker of oligodendroglial tumour cells.</title>
        <authorList>
            <person name="Marie Y."/>
            <person name="Sanson M."/>
            <person name="Mokhtari K."/>
            <person name="Leuraud P."/>
            <person name="Kujas M."/>
            <person name="Delattre J.-Y."/>
            <person name="Poirier J."/>
            <person name="Zalc B."/>
            <person name="Hoang-Xuan K."/>
        </authorList>
    </citation>
    <scope>TISSUE SPECIFICITY</scope>
</reference>
<reference key="6">
    <citation type="journal article" date="2001" name="Proc. Natl. Acad. Sci. U.S.A.">
        <title>Oligodendrocyte lineage genes (OLIG) as molecular markers for human glial brain tumors.</title>
        <authorList>
            <person name="Lu Q.R."/>
            <person name="Park J.K."/>
            <person name="Noll E."/>
            <person name="Chan J.A."/>
            <person name="Alberta J.A."/>
            <person name="Yuk D.-I."/>
            <person name="Alzamora M.G."/>
            <person name="Louis D.N."/>
            <person name="Stiles C.D."/>
            <person name="Rowitch D.H."/>
            <person name="Black P.M."/>
        </authorList>
    </citation>
    <scope>TISSUE SPECIFICITY</scope>
</reference>